<feature type="chain" id="PRO_1000132669" description="Flagellar hook-basal body complex protein FliE">
    <location>
        <begin position="1"/>
        <end position="104"/>
    </location>
</feature>
<comment type="subcellular location">
    <subcellularLocation>
        <location evidence="1">Bacterial flagellum basal body</location>
    </subcellularLocation>
</comment>
<comment type="similarity">
    <text evidence="1">Belongs to the FliE family.</text>
</comment>
<gene>
    <name evidence="1" type="primary">fliE</name>
    <name type="ordered locus">SeAg_B1152</name>
</gene>
<proteinExistence type="inferred from homology"/>
<keyword id="KW-0975">Bacterial flagellum</keyword>
<sequence>MAAIQGIEGVISQLQATAMAARGQDTHSQSTVSFAGQLHAALDRISDRQTAARVQAEKFTLGEPGIALNDVMADMQKASVSMQMGIQVRNKLVAAYQEVMSMQV</sequence>
<name>FLIE_SALA4</name>
<evidence type="ECO:0000255" key="1">
    <source>
        <dbReference type="HAMAP-Rule" id="MF_00724"/>
    </source>
</evidence>
<dbReference type="EMBL" id="CP001138">
    <property type="protein sequence ID" value="ACH49398.1"/>
    <property type="molecule type" value="Genomic_DNA"/>
</dbReference>
<dbReference type="RefSeq" id="WP_000719037.1">
    <property type="nucleotide sequence ID" value="NC_011149.1"/>
</dbReference>
<dbReference type="SMR" id="B5F2S0"/>
<dbReference type="KEGG" id="sea:SeAg_B1152"/>
<dbReference type="HOGENOM" id="CLU_147249_0_2_6"/>
<dbReference type="Proteomes" id="UP000008819">
    <property type="component" value="Chromosome"/>
</dbReference>
<dbReference type="GO" id="GO:0009425">
    <property type="term" value="C:bacterial-type flagellum basal body"/>
    <property type="evidence" value="ECO:0007669"/>
    <property type="project" value="UniProtKB-SubCell"/>
</dbReference>
<dbReference type="GO" id="GO:0003774">
    <property type="term" value="F:cytoskeletal motor activity"/>
    <property type="evidence" value="ECO:0007669"/>
    <property type="project" value="InterPro"/>
</dbReference>
<dbReference type="GO" id="GO:0005198">
    <property type="term" value="F:structural molecule activity"/>
    <property type="evidence" value="ECO:0007669"/>
    <property type="project" value="InterPro"/>
</dbReference>
<dbReference type="GO" id="GO:0071973">
    <property type="term" value="P:bacterial-type flagellum-dependent cell motility"/>
    <property type="evidence" value="ECO:0007669"/>
    <property type="project" value="InterPro"/>
</dbReference>
<dbReference type="HAMAP" id="MF_00724">
    <property type="entry name" value="FliE"/>
    <property type="match status" value="1"/>
</dbReference>
<dbReference type="InterPro" id="IPR001624">
    <property type="entry name" value="FliE"/>
</dbReference>
<dbReference type="NCBIfam" id="TIGR00205">
    <property type="entry name" value="fliE"/>
    <property type="match status" value="1"/>
</dbReference>
<dbReference type="PANTHER" id="PTHR34653">
    <property type="match status" value="1"/>
</dbReference>
<dbReference type="PANTHER" id="PTHR34653:SF1">
    <property type="entry name" value="FLAGELLAR HOOK-BASAL BODY COMPLEX PROTEIN FLIE"/>
    <property type="match status" value="1"/>
</dbReference>
<dbReference type="Pfam" id="PF02049">
    <property type="entry name" value="FliE"/>
    <property type="match status" value="1"/>
</dbReference>
<dbReference type="PRINTS" id="PR01006">
    <property type="entry name" value="FLGHOOKFLIE"/>
</dbReference>
<organism>
    <name type="scientific">Salmonella agona (strain SL483)</name>
    <dbReference type="NCBI Taxonomy" id="454166"/>
    <lineage>
        <taxon>Bacteria</taxon>
        <taxon>Pseudomonadati</taxon>
        <taxon>Pseudomonadota</taxon>
        <taxon>Gammaproteobacteria</taxon>
        <taxon>Enterobacterales</taxon>
        <taxon>Enterobacteriaceae</taxon>
        <taxon>Salmonella</taxon>
    </lineage>
</organism>
<protein>
    <recommendedName>
        <fullName evidence="1">Flagellar hook-basal body complex protein FliE</fullName>
    </recommendedName>
</protein>
<reference key="1">
    <citation type="journal article" date="2011" name="J. Bacteriol.">
        <title>Comparative genomics of 28 Salmonella enterica isolates: evidence for CRISPR-mediated adaptive sublineage evolution.</title>
        <authorList>
            <person name="Fricke W.F."/>
            <person name="Mammel M.K."/>
            <person name="McDermott P.F."/>
            <person name="Tartera C."/>
            <person name="White D.G."/>
            <person name="Leclerc J.E."/>
            <person name="Ravel J."/>
            <person name="Cebula T.A."/>
        </authorList>
    </citation>
    <scope>NUCLEOTIDE SEQUENCE [LARGE SCALE GENOMIC DNA]</scope>
    <source>
        <strain>SL483</strain>
    </source>
</reference>
<accession>B5F2S0</accession>